<evidence type="ECO:0000250" key="1"/>
<evidence type="ECO:0000255" key="2"/>
<evidence type="ECO:0000256" key="3">
    <source>
        <dbReference type="SAM" id="MobiDB-lite"/>
    </source>
</evidence>
<evidence type="ECO:0000305" key="4"/>
<keyword id="KW-0053">Apoptosis</keyword>
<keyword id="KW-0378">Hydrolase</keyword>
<keyword id="KW-0645">Protease</keyword>
<keyword id="KW-1185">Reference proteome</keyword>
<keyword id="KW-0788">Thiol protease</keyword>
<keyword id="KW-0865">Zymogen</keyword>
<reference key="1">
    <citation type="journal article" date="2009" name="Nature">
        <title>Evolution of pathogenicity and sexual reproduction in eight Candida genomes.</title>
        <authorList>
            <person name="Butler G."/>
            <person name="Rasmussen M.D."/>
            <person name="Lin M.F."/>
            <person name="Santos M.A.S."/>
            <person name="Sakthikumar S."/>
            <person name="Munro C.A."/>
            <person name="Rheinbay E."/>
            <person name="Grabherr M."/>
            <person name="Forche A."/>
            <person name="Reedy J.L."/>
            <person name="Agrafioti I."/>
            <person name="Arnaud M.B."/>
            <person name="Bates S."/>
            <person name="Brown A.J.P."/>
            <person name="Brunke S."/>
            <person name="Costanzo M.C."/>
            <person name="Fitzpatrick D.A."/>
            <person name="de Groot P.W.J."/>
            <person name="Harris D."/>
            <person name="Hoyer L.L."/>
            <person name="Hube B."/>
            <person name="Klis F.M."/>
            <person name="Kodira C."/>
            <person name="Lennard N."/>
            <person name="Logue M.E."/>
            <person name="Martin R."/>
            <person name="Neiman A.M."/>
            <person name="Nikolaou E."/>
            <person name="Quail M.A."/>
            <person name="Quinn J."/>
            <person name="Santos M.C."/>
            <person name="Schmitzberger F.F."/>
            <person name="Sherlock G."/>
            <person name="Shah P."/>
            <person name="Silverstein K.A.T."/>
            <person name="Skrzypek M.S."/>
            <person name="Soll D."/>
            <person name="Staggs R."/>
            <person name="Stansfield I."/>
            <person name="Stumpf M.P.H."/>
            <person name="Sudbery P.E."/>
            <person name="Srikantha T."/>
            <person name="Zeng Q."/>
            <person name="Berman J."/>
            <person name="Berriman M."/>
            <person name="Heitman J."/>
            <person name="Gow N.A.R."/>
            <person name="Lorenz M.C."/>
            <person name="Birren B.W."/>
            <person name="Kellis M."/>
            <person name="Cuomo C.A."/>
        </authorList>
    </citation>
    <scope>NUCLEOTIDE SEQUENCE [LARGE SCALE GENOMIC DNA]</scope>
    <source>
        <strain>ATCC 11503 / BCRC 21390 / CBS 2605 / JCM 1781 / NBRC 1676 / NRRL YB-4239</strain>
    </source>
</reference>
<gene>
    <name type="primary">MCA1</name>
    <name type="ORF">LELG_02861</name>
</gene>
<organism>
    <name type="scientific">Lodderomyces elongisporus (strain ATCC 11503 / CBS 2605 / JCM 1781 / NBRC 1676 / NRRL YB-4239)</name>
    <name type="common">Yeast</name>
    <name type="synonym">Saccharomyces elongisporus</name>
    <dbReference type="NCBI Taxonomy" id="379508"/>
    <lineage>
        <taxon>Eukaryota</taxon>
        <taxon>Fungi</taxon>
        <taxon>Dikarya</taxon>
        <taxon>Ascomycota</taxon>
        <taxon>Saccharomycotina</taxon>
        <taxon>Pichiomycetes</taxon>
        <taxon>Debaryomycetaceae</taxon>
        <taxon>Candida/Lodderomyces clade</taxon>
        <taxon>Lodderomyces</taxon>
    </lineage>
</organism>
<protein>
    <recommendedName>
        <fullName>Metacaspase-1</fullName>
        <ecNumber>3.4.22.-</ecNumber>
    </recommendedName>
</protein>
<proteinExistence type="inferred from homology"/>
<feature type="propeptide" id="PRO_0000333652" evidence="2">
    <location>
        <begin position="1"/>
        <end status="unknown"/>
    </location>
</feature>
<feature type="chain" id="PRO_0000333653" description="Metacaspase-1">
    <location>
        <begin status="unknown"/>
        <end position="449"/>
    </location>
</feature>
<feature type="region of interest" description="Disordered" evidence="3">
    <location>
        <begin position="1"/>
        <end position="132"/>
    </location>
</feature>
<feature type="compositionally biased region" description="Low complexity" evidence="3">
    <location>
        <begin position="10"/>
        <end position="26"/>
    </location>
</feature>
<feature type="compositionally biased region" description="Pro residues" evidence="3">
    <location>
        <begin position="27"/>
        <end position="55"/>
    </location>
</feature>
<feature type="compositionally biased region" description="Polar residues" evidence="3">
    <location>
        <begin position="56"/>
        <end position="66"/>
    </location>
</feature>
<feature type="compositionally biased region" description="Low complexity" evidence="3">
    <location>
        <begin position="67"/>
        <end position="91"/>
    </location>
</feature>
<feature type="compositionally biased region" description="Low complexity" evidence="3">
    <location>
        <begin position="98"/>
        <end position="112"/>
    </location>
</feature>
<feature type="compositionally biased region" description="Polar residues" evidence="3">
    <location>
        <begin position="119"/>
        <end position="132"/>
    </location>
</feature>
<feature type="active site" evidence="1">
    <location>
        <position position="232"/>
    </location>
</feature>
<feature type="active site" evidence="1">
    <location>
        <position position="293"/>
    </location>
</feature>
<dbReference type="EC" id="3.4.22.-"/>
<dbReference type="EMBL" id="CH981526">
    <property type="protein sequence ID" value="EDK44682.1"/>
    <property type="molecule type" value="Genomic_DNA"/>
</dbReference>
<dbReference type="RefSeq" id="XP_001526303.1">
    <property type="nucleotide sequence ID" value="XM_001526253.1"/>
</dbReference>
<dbReference type="SMR" id="A5DZS4"/>
<dbReference type="FunCoup" id="A5DZS4">
    <property type="interactions" value="346"/>
</dbReference>
<dbReference type="STRING" id="379508.A5DZS4"/>
<dbReference type="GeneID" id="5233429"/>
<dbReference type="KEGG" id="lel:PVL30_003700"/>
<dbReference type="VEuPathDB" id="FungiDB:LELG_02861"/>
<dbReference type="eggNOG" id="KOG1546">
    <property type="taxonomic scope" value="Eukaryota"/>
</dbReference>
<dbReference type="HOGENOM" id="CLU_029389_0_1_1"/>
<dbReference type="InParanoid" id="A5DZS4"/>
<dbReference type="OMA" id="MHRIMVT"/>
<dbReference type="OrthoDB" id="3223806at2759"/>
<dbReference type="Proteomes" id="UP000001996">
    <property type="component" value="Unassembled WGS sequence"/>
</dbReference>
<dbReference type="GO" id="GO:0005737">
    <property type="term" value="C:cytoplasm"/>
    <property type="evidence" value="ECO:0007669"/>
    <property type="project" value="TreeGrafter"/>
</dbReference>
<dbReference type="GO" id="GO:0004197">
    <property type="term" value="F:cysteine-type endopeptidase activity"/>
    <property type="evidence" value="ECO:0007669"/>
    <property type="project" value="InterPro"/>
</dbReference>
<dbReference type="GO" id="GO:0006915">
    <property type="term" value="P:apoptotic process"/>
    <property type="evidence" value="ECO:0007669"/>
    <property type="project" value="UniProtKB-KW"/>
</dbReference>
<dbReference type="GO" id="GO:0006508">
    <property type="term" value="P:proteolysis"/>
    <property type="evidence" value="ECO:0007669"/>
    <property type="project" value="UniProtKB-KW"/>
</dbReference>
<dbReference type="Gene3D" id="3.40.50.12660">
    <property type="match status" value="1"/>
</dbReference>
<dbReference type="InterPro" id="IPR029030">
    <property type="entry name" value="Caspase-like_dom_sf"/>
</dbReference>
<dbReference type="InterPro" id="IPR050452">
    <property type="entry name" value="Metacaspase"/>
</dbReference>
<dbReference type="InterPro" id="IPR011600">
    <property type="entry name" value="Pept_C14_caspase"/>
</dbReference>
<dbReference type="PANTHER" id="PTHR48104:SF30">
    <property type="entry name" value="METACASPASE-1"/>
    <property type="match status" value="1"/>
</dbReference>
<dbReference type="PANTHER" id="PTHR48104">
    <property type="entry name" value="METACASPASE-4"/>
    <property type="match status" value="1"/>
</dbReference>
<dbReference type="Pfam" id="PF00656">
    <property type="entry name" value="Peptidase_C14"/>
    <property type="match status" value="1"/>
</dbReference>
<dbReference type="SUPFAM" id="SSF52129">
    <property type="entry name" value="Caspase-like"/>
    <property type="match status" value="1"/>
</dbReference>
<name>MCA1_LODEL</name>
<sequence length="449" mass="49227">MFPGQGRHTYGGQQQLLQLQQYNYGPPQGPPPNGYGPPPGPPPNGYGPPPGPPPQNSWGYGNPSGTQSSNQQRYQGQQSGQQNYNGGYQRPSQPPPQQSGNQRGQPGQNGEPDYGHQYGSGQYSRPPTNQQSFGVENYNYQYSACNGRKKALLVGINYIGTANELRGPINDVNNVEQFLLTHGFKSDDIVKLTDDQRVQRAIPTRQNILDAIQWLVKDARPNDSLFFHYSGHGGQTEDQPDQYGNYDEDDGYDEVIYPLDFQTNGFIVDDLLHDMMVKTLPPGCRMTALFDSCHSGSVLDLPYMYSTKGVLKEPNVMKEAGQGLLQAAMSYATGNSAGIFKGLSSSVKSFMNQGRSSQANEYSKQTKTAACDAISLSGCKDDQTSADSSIGGQATGAMSYAFLTVMNQNPNQSYLSLLQNMRTILQSKYSQKPQLTASHPIDCNLQFIF</sequence>
<accession>A5DZS4</accession>
<comment type="function">
    <text evidence="1">Involved in cell death (apoptosis).</text>
</comment>
<comment type="similarity">
    <text evidence="4">Belongs to the peptidase C14B family.</text>
</comment>